<organism>
    <name type="scientific">Acinetobacter baumannii (strain SDF)</name>
    <dbReference type="NCBI Taxonomy" id="509170"/>
    <lineage>
        <taxon>Bacteria</taxon>
        <taxon>Pseudomonadati</taxon>
        <taxon>Pseudomonadota</taxon>
        <taxon>Gammaproteobacteria</taxon>
        <taxon>Moraxellales</taxon>
        <taxon>Moraxellaceae</taxon>
        <taxon>Acinetobacter</taxon>
        <taxon>Acinetobacter calcoaceticus/baumannii complex</taxon>
    </lineage>
</organism>
<proteinExistence type="inferred from homology"/>
<evidence type="ECO:0000255" key="1">
    <source>
        <dbReference type="HAMAP-Rule" id="MF_01274"/>
    </source>
</evidence>
<accession>B0VU08</accession>
<dbReference type="EC" id="2.7.1.33" evidence="1"/>
<dbReference type="EMBL" id="CU468230">
    <property type="protein sequence ID" value="CAP01971.1"/>
    <property type="molecule type" value="Genomic_DNA"/>
</dbReference>
<dbReference type="SMR" id="B0VU08"/>
<dbReference type="KEGG" id="abm:ABSDF2665"/>
<dbReference type="HOGENOM" id="CLU_066627_0_1_6"/>
<dbReference type="UniPathway" id="UPA00241">
    <property type="reaction ID" value="UER00352"/>
</dbReference>
<dbReference type="Proteomes" id="UP000001741">
    <property type="component" value="Chromosome"/>
</dbReference>
<dbReference type="GO" id="GO:0005737">
    <property type="term" value="C:cytoplasm"/>
    <property type="evidence" value="ECO:0007669"/>
    <property type="project" value="UniProtKB-SubCell"/>
</dbReference>
<dbReference type="GO" id="GO:0005524">
    <property type="term" value="F:ATP binding"/>
    <property type="evidence" value="ECO:0007669"/>
    <property type="project" value="UniProtKB-UniRule"/>
</dbReference>
<dbReference type="GO" id="GO:0004594">
    <property type="term" value="F:pantothenate kinase activity"/>
    <property type="evidence" value="ECO:0007669"/>
    <property type="project" value="UniProtKB-UniRule"/>
</dbReference>
<dbReference type="GO" id="GO:0015937">
    <property type="term" value="P:coenzyme A biosynthetic process"/>
    <property type="evidence" value="ECO:0007669"/>
    <property type="project" value="UniProtKB-UniRule"/>
</dbReference>
<dbReference type="CDD" id="cd24015">
    <property type="entry name" value="ASKHA_NBD_PanK-III"/>
    <property type="match status" value="1"/>
</dbReference>
<dbReference type="Gene3D" id="3.30.420.40">
    <property type="match status" value="2"/>
</dbReference>
<dbReference type="HAMAP" id="MF_01274">
    <property type="entry name" value="Pantothen_kinase_3"/>
    <property type="match status" value="1"/>
</dbReference>
<dbReference type="InterPro" id="IPR043129">
    <property type="entry name" value="ATPase_NBD"/>
</dbReference>
<dbReference type="InterPro" id="IPR004619">
    <property type="entry name" value="Type_III_PanK"/>
</dbReference>
<dbReference type="NCBIfam" id="TIGR00671">
    <property type="entry name" value="baf"/>
    <property type="match status" value="1"/>
</dbReference>
<dbReference type="NCBIfam" id="NF009856">
    <property type="entry name" value="PRK13322.1-1"/>
    <property type="match status" value="1"/>
</dbReference>
<dbReference type="PANTHER" id="PTHR34265">
    <property type="entry name" value="TYPE III PANTOTHENATE KINASE"/>
    <property type="match status" value="1"/>
</dbReference>
<dbReference type="PANTHER" id="PTHR34265:SF1">
    <property type="entry name" value="TYPE III PANTOTHENATE KINASE"/>
    <property type="match status" value="1"/>
</dbReference>
<dbReference type="Pfam" id="PF03309">
    <property type="entry name" value="Pan_kinase"/>
    <property type="match status" value="1"/>
</dbReference>
<dbReference type="SUPFAM" id="SSF53067">
    <property type="entry name" value="Actin-like ATPase domain"/>
    <property type="match status" value="2"/>
</dbReference>
<name>COAX_ACIBS</name>
<feature type="chain" id="PRO_1000140212" description="Type III pantothenate kinase">
    <location>
        <begin position="1"/>
        <end position="244"/>
    </location>
</feature>
<feature type="active site" description="Proton acceptor" evidence="1">
    <location>
        <position position="104"/>
    </location>
</feature>
<feature type="binding site" evidence="1">
    <location>
        <begin position="7"/>
        <end position="14"/>
    </location>
    <ligand>
        <name>ATP</name>
        <dbReference type="ChEBI" id="CHEBI:30616"/>
    </ligand>
</feature>
<feature type="binding site" evidence="1">
    <location>
        <position position="95"/>
    </location>
    <ligand>
        <name>substrate</name>
    </ligand>
</feature>
<feature type="binding site" evidence="1">
    <location>
        <begin position="102"/>
        <end position="105"/>
    </location>
    <ligand>
        <name>substrate</name>
    </ligand>
</feature>
<feature type="binding site" evidence="1">
    <location>
        <position position="126"/>
    </location>
    <ligand>
        <name>ATP</name>
        <dbReference type="ChEBI" id="CHEBI:30616"/>
    </ligand>
</feature>
<feature type="binding site" evidence="1">
    <location>
        <position position="177"/>
    </location>
    <ligand>
        <name>substrate</name>
    </ligand>
</feature>
<comment type="function">
    <text evidence="1">Catalyzes the phosphorylation of pantothenate (Pan), the first step in CoA biosynthesis.</text>
</comment>
<comment type="catalytic activity">
    <reaction evidence="1">
        <text>(R)-pantothenate + ATP = (R)-4'-phosphopantothenate + ADP + H(+)</text>
        <dbReference type="Rhea" id="RHEA:16373"/>
        <dbReference type="ChEBI" id="CHEBI:10986"/>
        <dbReference type="ChEBI" id="CHEBI:15378"/>
        <dbReference type="ChEBI" id="CHEBI:29032"/>
        <dbReference type="ChEBI" id="CHEBI:30616"/>
        <dbReference type="ChEBI" id="CHEBI:456216"/>
        <dbReference type="EC" id="2.7.1.33"/>
    </reaction>
</comment>
<comment type="cofactor">
    <cofactor evidence="1">
        <name>NH4(+)</name>
        <dbReference type="ChEBI" id="CHEBI:28938"/>
    </cofactor>
    <cofactor evidence="1">
        <name>K(+)</name>
        <dbReference type="ChEBI" id="CHEBI:29103"/>
    </cofactor>
    <text evidence="1">A monovalent cation. Ammonium or potassium.</text>
</comment>
<comment type="pathway">
    <text evidence="1">Cofactor biosynthesis; coenzyme A biosynthesis; CoA from (R)-pantothenate: step 1/5.</text>
</comment>
<comment type="subunit">
    <text evidence="1">Homodimer.</text>
</comment>
<comment type="subcellular location">
    <subcellularLocation>
        <location evidence="1">Cytoplasm</location>
    </subcellularLocation>
</comment>
<comment type="similarity">
    <text evidence="1">Belongs to the type III pantothenate kinase family.</text>
</comment>
<keyword id="KW-0067">ATP-binding</keyword>
<keyword id="KW-0173">Coenzyme A biosynthesis</keyword>
<keyword id="KW-0963">Cytoplasm</keyword>
<keyword id="KW-0418">Kinase</keyword>
<keyword id="KW-0547">Nucleotide-binding</keyword>
<keyword id="KW-0630">Potassium</keyword>
<keyword id="KW-0808">Transferase</keyword>
<protein>
    <recommendedName>
        <fullName evidence="1">Type III pantothenate kinase</fullName>
        <ecNumber evidence="1">2.7.1.33</ecNumber>
    </recommendedName>
    <alternativeName>
        <fullName evidence="1">PanK-III</fullName>
    </alternativeName>
    <alternativeName>
        <fullName evidence="1">Pantothenic acid kinase</fullName>
    </alternativeName>
</protein>
<sequence>MKSLWLDIGNTRLKYWITENQQIIEHAAELHLQSPADLLLGLIQHFKHQGLHRIGISSVLDTENNQRIQQILKWLEIPVVFAKVHAEYAGLQCGYEVPSQLGIDRWLQVLAVAEEKENYCIIGCGTALTIDLTKGKQHLGGYILPNLYLQRDALIQNTKGIKIPDSAFDNLNPGNNTVDAVHHGILLGLISTIESIMQQSPKKLLLTGGDAPLFAKFLQKYQPTVETDLLLKGLQQYIAHYPKD</sequence>
<gene>
    <name evidence="1" type="primary">coaX</name>
    <name type="ordered locus">ABSDF2665</name>
</gene>
<reference key="1">
    <citation type="journal article" date="2008" name="PLoS ONE">
        <title>Comparative analysis of Acinetobacters: three genomes for three lifestyles.</title>
        <authorList>
            <person name="Vallenet D."/>
            <person name="Nordmann P."/>
            <person name="Barbe V."/>
            <person name="Poirel L."/>
            <person name="Mangenot S."/>
            <person name="Bataille E."/>
            <person name="Dossat C."/>
            <person name="Gas S."/>
            <person name="Kreimeyer A."/>
            <person name="Lenoble P."/>
            <person name="Oztas S."/>
            <person name="Poulain J."/>
            <person name="Segurens B."/>
            <person name="Robert C."/>
            <person name="Abergel C."/>
            <person name="Claverie J.-M."/>
            <person name="Raoult D."/>
            <person name="Medigue C."/>
            <person name="Weissenbach J."/>
            <person name="Cruveiller S."/>
        </authorList>
    </citation>
    <scope>NUCLEOTIDE SEQUENCE [LARGE SCALE GENOMIC DNA]</scope>
    <source>
        <strain>SDF</strain>
    </source>
</reference>